<protein>
    <recommendedName>
        <fullName evidence="10">Transcription factor SOX-4</fullName>
    </recommendedName>
</protein>
<dbReference type="EMBL" id="X70683">
    <property type="protein sequence ID" value="CAA50018.1"/>
    <property type="molecule type" value="mRNA"/>
</dbReference>
<dbReference type="EMBL" id="AL136179">
    <property type="status" value="NOT_ANNOTATED_CDS"/>
    <property type="molecule type" value="Genomic_DNA"/>
</dbReference>
<dbReference type="EMBL" id="BC072668">
    <property type="protein sequence ID" value="AAH72668.1"/>
    <property type="molecule type" value="mRNA"/>
</dbReference>
<dbReference type="EMBL" id="X65661">
    <property type="protein sequence ID" value="CAA46612.1"/>
    <property type="molecule type" value="mRNA"/>
</dbReference>
<dbReference type="CCDS" id="CCDS4547.1"/>
<dbReference type="PIR" id="I38240">
    <property type="entry name" value="I38240"/>
</dbReference>
<dbReference type="RefSeq" id="NP_003098.1">
    <property type="nucleotide sequence ID" value="NM_003107.3"/>
</dbReference>
<dbReference type="SMR" id="Q06945"/>
<dbReference type="BioGRID" id="112542">
    <property type="interactions" value="77"/>
</dbReference>
<dbReference type="CORUM" id="Q06945"/>
<dbReference type="DIP" id="DIP-58650N"/>
<dbReference type="FunCoup" id="Q06945">
    <property type="interactions" value="255"/>
</dbReference>
<dbReference type="IntAct" id="Q06945">
    <property type="interactions" value="28"/>
</dbReference>
<dbReference type="STRING" id="9606.ENSP00000244745"/>
<dbReference type="GlyGen" id="Q06945">
    <property type="glycosylation" value="1 site"/>
</dbReference>
<dbReference type="iPTMnet" id="Q06945"/>
<dbReference type="PhosphoSitePlus" id="Q06945"/>
<dbReference type="BioMuta" id="SOX4"/>
<dbReference type="DMDM" id="548952"/>
<dbReference type="jPOST" id="Q06945"/>
<dbReference type="MassIVE" id="Q06945"/>
<dbReference type="PaxDb" id="9606-ENSP00000244745"/>
<dbReference type="PeptideAtlas" id="Q06945"/>
<dbReference type="ProteomicsDB" id="58488"/>
<dbReference type="Pumba" id="Q06945"/>
<dbReference type="Antibodypedia" id="25243">
    <property type="antibodies" value="293 antibodies from 36 providers"/>
</dbReference>
<dbReference type="DNASU" id="6659"/>
<dbReference type="Ensembl" id="ENST00000244745.4">
    <property type="protein sequence ID" value="ENSP00000244745.1"/>
    <property type="gene ID" value="ENSG00000124766.7"/>
</dbReference>
<dbReference type="GeneID" id="6659"/>
<dbReference type="KEGG" id="hsa:6659"/>
<dbReference type="MANE-Select" id="ENST00000244745.4">
    <property type="protein sequence ID" value="ENSP00000244745.1"/>
    <property type="RefSeq nucleotide sequence ID" value="NM_003107.3"/>
    <property type="RefSeq protein sequence ID" value="NP_003098.1"/>
</dbReference>
<dbReference type="UCSC" id="uc003ndi.4">
    <property type="organism name" value="human"/>
</dbReference>
<dbReference type="AGR" id="HGNC:11200"/>
<dbReference type="CTD" id="6659"/>
<dbReference type="DisGeNET" id="6659"/>
<dbReference type="GeneCards" id="SOX4"/>
<dbReference type="GeneReviews" id="SOX4"/>
<dbReference type="HGNC" id="HGNC:11200">
    <property type="gene designation" value="SOX4"/>
</dbReference>
<dbReference type="HPA" id="ENSG00000124766">
    <property type="expression patterns" value="Tissue enhanced (lymphoid tissue, ovary)"/>
</dbReference>
<dbReference type="MalaCards" id="SOX4"/>
<dbReference type="MIM" id="184430">
    <property type="type" value="gene"/>
</dbReference>
<dbReference type="MIM" id="618506">
    <property type="type" value="phenotype"/>
</dbReference>
<dbReference type="neXtProt" id="NX_Q06945"/>
<dbReference type="OpenTargets" id="ENSG00000124766"/>
<dbReference type="Orphanet" id="1465">
    <property type="disease" value="Coffin-Siris syndrome"/>
</dbReference>
<dbReference type="PharmGKB" id="PA36037"/>
<dbReference type="VEuPathDB" id="HostDB:ENSG00000124766"/>
<dbReference type="eggNOG" id="KOG0527">
    <property type="taxonomic scope" value="Eukaryota"/>
</dbReference>
<dbReference type="GeneTree" id="ENSGT00940000161470"/>
<dbReference type="HOGENOM" id="CLU_043342_0_0_1"/>
<dbReference type="InParanoid" id="Q06945"/>
<dbReference type="OMA" id="LYKPRGA"/>
<dbReference type="OrthoDB" id="6247875at2759"/>
<dbReference type="PAN-GO" id="Q06945">
    <property type="GO annotations" value="5 GO annotations based on evolutionary models"/>
</dbReference>
<dbReference type="PhylomeDB" id="Q06945"/>
<dbReference type="PathwayCommons" id="Q06945"/>
<dbReference type="Reactome" id="R-HSA-3769402">
    <property type="pathway name" value="Deactivation of the beta-catenin transactivating complex"/>
</dbReference>
<dbReference type="SignaLink" id="Q06945"/>
<dbReference type="SIGNOR" id="Q06945"/>
<dbReference type="BioGRID-ORCS" id="6659">
    <property type="hits" value="42 hits in 1181 CRISPR screens"/>
</dbReference>
<dbReference type="ChiTaRS" id="SOX4">
    <property type="organism name" value="human"/>
</dbReference>
<dbReference type="GeneWiki" id="SOX4"/>
<dbReference type="GenomeRNAi" id="6659"/>
<dbReference type="Pharos" id="Q06945">
    <property type="development level" value="Tbio"/>
</dbReference>
<dbReference type="PRO" id="PR:Q06945"/>
<dbReference type="Proteomes" id="UP000005640">
    <property type="component" value="Chromosome 6"/>
</dbReference>
<dbReference type="RNAct" id="Q06945">
    <property type="molecule type" value="protein"/>
</dbReference>
<dbReference type="Bgee" id="ENSG00000124766">
    <property type="expression patterns" value="Expressed in cortical plate and 207 other cell types or tissues"/>
</dbReference>
<dbReference type="GO" id="GO:0000785">
    <property type="term" value="C:chromatin"/>
    <property type="evidence" value="ECO:0000247"/>
    <property type="project" value="NTNU_SB"/>
</dbReference>
<dbReference type="GO" id="GO:0005737">
    <property type="term" value="C:cytoplasm"/>
    <property type="evidence" value="ECO:0000314"/>
    <property type="project" value="BHF-UCL"/>
</dbReference>
<dbReference type="GO" id="GO:0005739">
    <property type="term" value="C:mitochondrion"/>
    <property type="evidence" value="ECO:0000314"/>
    <property type="project" value="HPA"/>
</dbReference>
<dbReference type="GO" id="GO:0005654">
    <property type="term" value="C:nucleoplasm"/>
    <property type="evidence" value="ECO:0000314"/>
    <property type="project" value="HPA"/>
</dbReference>
<dbReference type="GO" id="GO:0005634">
    <property type="term" value="C:nucleus"/>
    <property type="evidence" value="ECO:0000314"/>
    <property type="project" value="UniProtKB"/>
</dbReference>
<dbReference type="GO" id="GO:0005667">
    <property type="term" value="C:transcription regulator complex"/>
    <property type="evidence" value="ECO:0007669"/>
    <property type="project" value="Ensembl"/>
</dbReference>
<dbReference type="GO" id="GO:0001228">
    <property type="term" value="F:DNA-binding transcription activator activity, RNA polymerase II-specific"/>
    <property type="evidence" value="ECO:0000314"/>
    <property type="project" value="UniProtKB"/>
</dbReference>
<dbReference type="GO" id="GO:0003700">
    <property type="term" value="F:DNA-binding transcription factor activity"/>
    <property type="evidence" value="ECO:0000314"/>
    <property type="project" value="BHF-UCL"/>
</dbReference>
<dbReference type="GO" id="GO:0000981">
    <property type="term" value="F:DNA-binding transcription factor activity, RNA polymerase II-specific"/>
    <property type="evidence" value="ECO:0000247"/>
    <property type="project" value="NTNU_SB"/>
</dbReference>
<dbReference type="GO" id="GO:0035198">
    <property type="term" value="F:miRNA binding"/>
    <property type="evidence" value="ECO:0007669"/>
    <property type="project" value="Ensembl"/>
</dbReference>
<dbReference type="GO" id="GO:0000978">
    <property type="term" value="F:RNA polymerase II cis-regulatory region sequence-specific DNA binding"/>
    <property type="evidence" value="ECO:0000314"/>
    <property type="project" value="UniProtKB"/>
</dbReference>
<dbReference type="GO" id="GO:1990837">
    <property type="term" value="F:sequence-specific double-stranded DNA binding"/>
    <property type="evidence" value="ECO:0000314"/>
    <property type="project" value="ARUK-UCL"/>
</dbReference>
<dbReference type="GO" id="GO:0000976">
    <property type="term" value="F:transcription cis-regulatory region binding"/>
    <property type="evidence" value="ECO:0000250"/>
    <property type="project" value="UniProtKB"/>
</dbReference>
<dbReference type="GO" id="GO:0035910">
    <property type="term" value="P:ascending aorta morphogenesis"/>
    <property type="evidence" value="ECO:0000250"/>
    <property type="project" value="BHF-UCL"/>
</dbReference>
<dbReference type="GO" id="GO:0003289">
    <property type="term" value="P:atrial septum primum morphogenesis"/>
    <property type="evidence" value="ECO:0000250"/>
    <property type="project" value="BHF-UCL"/>
</dbReference>
<dbReference type="GO" id="GO:0007420">
    <property type="term" value="P:brain development"/>
    <property type="evidence" value="ECO:0000318"/>
    <property type="project" value="GO_Central"/>
</dbReference>
<dbReference type="GO" id="GO:0048593">
    <property type="term" value="P:camera-type eye morphogenesis"/>
    <property type="evidence" value="ECO:0000318"/>
    <property type="project" value="GO_Central"/>
</dbReference>
<dbReference type="GO" id="GO:0003215">
    <property type="term" value="P:cardiac right ventricle morphogenesis"/>
    <property type="evidence" value="ECO:0000250"/>
    <property type="project" value="BHF-UCL"/>
</dbReference>
<dbReference type="GO" id="GO:0071333">
    <property type="term" value="P:cellular response to glucose stimulus"/>
    <property type="evidence" value="ECO:0000250"/>
    <property type="project" value="UniProtKB"/>
</dbReference>
<dbReference type="GO" id="GO:0031018">
    <property type="term" value="P:endocrine pancreas development"/>
    <property type="evidence" value="ECO:0007669"/>
    <property type="project" value="Ensembl"/>
</dbReference>
<dbReference type="GO" id="GO:0010467">
    <property type="term" value="P:gene expression"/>
    <property type="evidence" value="ECO:0007669"/>
    <property type="project" value="Ensembl"/>
</dbReference>
<dbReference type="GO" id="GO:0021782">
    <property type="term" value="P:glial cell development"/>
    <property type="evidence" value="ECO:0007669"/>
    <property type="project" value="Ensembl"/>
</dbReference>
<dbReference type="GO" id="GO:0014009">
    <property type="term" value="P:glial cell proliferation"/>
    <property type="evidence" value="ECO:0000250"/>
    <property type="project" value="UniProtKB"/>
</dbReference>
<dbReference type="GO" id="GO:0042593">
    <property type="term" value="P:glucose homeostasis"/>
    <property type="evidence" value="ECO:0000250"/>
    <property type="project" value="UniProtKB"/>
</dbReference>
<dbReference type="GO" id="GO:0007507">
    <property type="term" value="P:heart development"/>
    <property type="evidence" value="ECO:0000250"/>
    <property type="project" value="BHF-UCL"/>
</dbReference>
<dbReference type="GO" id="GO:0061484">
    <property type="term" value="P:hematopoietic stem cell homeostasis"/>
    <property type="evidence" value="ECO:0007669"/>
    <property type="project" value="Ensembl"/>
</dbReference>
<dbReference type="GO" id="GO:0060993">
    <property type="term" value="P:kidney morphogenesis"/>
    <property type="evidence" value="ECO:0000250"/>
    <property type="project" value="BHF-UCL"/>
</dbReference>
<dbReference type="GO" id="GO:0060485">
    <property type="term" value="P:mesenchyme development"/>
    <property type="evidence" value="ECO:0000250"/>
    <property type="project" value="UniProtKB"/>
</dbReference>
<dbReference type="GO" id="GO:0003183">
    <property type="term" value="P:mitral valve morphogenesis"/>
    <property type="evidence" value="ECO:0000250"/>
    <property type="project" value="BHF-UCL"/>
</dbReference>
<dbReference type="GO" id="GO:0045662">
    <property type="term" value="P:negative regulation of myoblast differentiation"/>
    <property type="evidence" value="ECO:0000314"/>
    <property type="project" value="UniProt"/>
</dbReference>
<dbReference type="GO" id="GO:0000122">
    <property type="term" value="P:negative regulation of transcription by RNA polymerase II"/>
    <property type="evidence" value="ECO:0000314"/>
    <property type="project" value="UniProt"/>
</dbReference>
<dbReference type="GO" id="GO:0007399">
    <property type="term" value="P:nervous system development"/>
    <property type="evidence" value="ECO:0000250"/>
    <property type="project" value="UniProtKB"/>
</dbReference>
<dbReference type="GO" id="GO:0060563">
    <property type="term" value="P:neuroepithelial cell differentiation"/>
    <property type="evidence" value="ECO:0000250"/>
    <property type="project" value="UniProtKB"/>
</dbReference>
<dbReference type="GO" id="GO:0030182">
    <property type="term" value="P:neuron differentiation"/>
    <property type="evidence" value="ECO:0000318"/>
    <property type="project" value="GO_Central"/>
</dbReference>
<dbReference type="GO" id="GO:0003357">
    <property type="term" value="P:noradrenergic neuron differentiation"/>
    <property type="evidence" value="ECO:0000250"/>
    <property type="project" value="UniProtKB"/>
</dbReference>
<dbReference type="GO" id="GO:0043065">
    <property type="term" value="P:positive regulation of apoptotic process"/>
    <property type="evidence" value="ECO:0000315"/>
    <property type="project" value="BHF-UCL"/>
</dbReference>
<dbReference type="GO" id="GO:0090263">
    <property type="term" value="P:positive regulation of canonical Wnt signaling pathway"/>
    <property type="evidence" value="ECO:0000250"/>
    <property type="project" value="UniProtKB"/>
</dbReference>
<dbReference type="GO" id="GO:0008284">
    <property type="term" value="P:positive regulation of cell population proliferation"/>
    <property type="evidence" value="ECO:0000315"/>
    <property type="project" value="BHF-UCL"/>
</dbReference>
<dbReference type="GO" id="GO:0045893">
    <property type="term" value="P:positive regulation of DNA-templated transcription"/>
    <property type="evidence" value="ECO:0000314"/>
    <property type="project" value="UniProtKB"/>
</dbReference>
<dbReference type="GO" id="GO:0045588">
    <property type="term" value="P:positive regulation of gamma-delta T cell differentiation"/>
    <property type="evidence" value="ECO:0000250"/>
    <property type="project" value="UniProtKB"/>
</dbReference>
<dbReference type="GO" id="GO:0032024">
    <property type="term" value="P:positive regulation of insulin secretion"/>
    <property type="evidence" value="ECO:0000250"/>
    <property type="project" value="UniProtKB"/>
</dbReference>
<dbReference type="GO" id="GO:0045663">
    <property type="term" value="P:positive regulation of myoblast differentiation"/>
    <property type="evidence" value="ECO:0000314"/>
    <property type="project" value="UniProtKB"/>
</dbReference>
<dbReference type="GO" id="GO:0045944">
    <property type="term" value="P:positive regulation of transcription by RNA polymerase II"/>
    <property type="evidence" value="ECO:0000314"/>
    <property type="project" value="UniProtKB"/>
</dbReference>
<dbReference type="GO" id="GO:0002328">
    <property type="term" value="P:pro-B cell differentiation"/>
    <property type="evidence" value="ECO:0000250"/>
    <property type="project" value="BHF-UCL"/>
</dbReference>
<dbReference type="GO" id="GO:0050821">
    <property type="term" value="P:protein stabilization"/>
    <property type="evidence" value="ECO:0000315"/>
    <property type="project" value="BHF-UCL"/>
</dbReference>
<dbReference type="GO" id="GO:0043516">
    <property type="term" value="P:regulation of DNA damage response, signal transduction by p53 class mediator"/>
    <property type="evidence" value="ECO:0000315"/>
    <property type="project" value="GO_Central"/>
</dbReference>
<dbReference type="GO" id="GO:0006355">
    <property type="term" value="P:regulation of DNA-templated transcription"/>
    <property type="evidence" value="ECO:0000314"/>
    <property type="project" value="BHF-UCL"/>
</dbReference>
<dbReference type="GO" id="GO:0035019">
    <property type="term" value="P:somatic stem cell population maintenance"/>
    <property type="evidence" value="ECO:0007669"/>
    <property type="project" value="Ensembl"/>
</dbReference>
<dbReference type="GO" id="GO:0021510">
    <property type="term" value="P:spinal cord development"/>
    <property type="evidence" value="ECO:0000250"/>
    <property type="project" value="UniProtKB"/>
</dbReference>
<dbReference type="GO" id="GO:0048485">
    <property type="term" value="P:sympathetic nervous system development"/>
    <property type="evidence" value="ECO:0000250"/>
    <property type="project" value="UniProtKB"/>
</dbReference>
<dbReference type="GO" id="GO:0030217">
    <property type="term" value="P:T cell differentiation"/>
    <property type="evidence" value="ECO:0000250"/>
    <property type="project" value="BHF-UCL"/>
</dbReference>
<dbReference type="GO" id="GO:0060412">
    <property type="term" value="P:ventricular septum morphogenesis"/>
    <property type="evidence" value="ECO:0000250"/>
    <property type="project" value="BHF-UCL"/>
</dbReference>
<dbReference type="CDD" id="cd22029">
    <property type="entry name" value="HMG-box_SoxC"/>
    <property type="match status" value="1"/>
</dbReference>
<dbReference type="FunFam" id="1.10.30.10:FF:000007">
    <property type="entry name" value="Transcription factor SOX"/>
    <property type="match status" value="1"/>
</dbReference>
<dbReference type="Gene3D" id="1.10.30.10">
    <property type="entry name" value="High mobility group box domain"/>
    <property type="match status" value="1"/>
</dbReference>
<dbReference type="InterPro" id="IPR009071">
    <property type="entry name" value="HMG_box_dom"/>
</dbReference>
<dbReference type="InterPro" id="IPR036910">
    <property type="entry name" value="HMG_box_dom_sf"/>
</dbReference>
<dbReference type="InterPro" id="IPR017386">
    <property type="entry name" value="SOX-12/11/4"/>
</dbReference>
<dbReference type="InterPro" id="IPR050140">
    <property type="entry name" value="SRY-related_HMG-box_TF-like"/>
</dbReference>
<dbReference type="PANTHER" id="PTHR10270">
    <property type="entry name" value="SOX TRANSCRIPTION FACTOR"/>
    <property type="match status" value="1"/>
</dbReference>
<dbReference type="PANTHER" id="PTHR10270:SF27">
    <property type="entry name" value="TRANSCRIPTION FACTOR SOX-4"/>
    <property type="match status" value="1"/>
</dbReference>
<dbReference type="Pfam" id="PF00505">
    <property type="entry name" value="HMG_box"/>
    <property type="match status" value="1"/>
</dbReference>
<dbReference type="PIRSF" id="PIRSF038098">
    <property type="entry name" value="SOX-12/11/4a"/>
    <property type="match status" value="1"/>
</dbReference>
<dbReference type="SMART" id="SM00398">
    <property type="entry name" value="HMG"/>
    <property type="match status" value="1"/>
</dbReference>
<dbReference type="SUPFAM" id="SSF47095">
    <property type="entry name" value="HMG-box"/>
    <property type="match status" value="1"/>
</dbReference>
<dbReference type="PROSITE" id="PS50118">
    <property type="entry name" value="HMG_BOX_2"/>
    <property type="match status" value="1"/>
</dbReference>
<name>SOX4_HUMAN</name>
<accession>Q06945</accession>
<comment type="function">
    <text evidence="1 5 6">Transcriptional activator that binds with high affinity to the T-cell enhancer motif 5'-AACAAAG-3' motif (PubMed:30661772). Required for IL17A-producing Vgamma2-positive gamma-delta T-cell maturation and development, via binding to regulator loci of RORC to modulate expression (By similarity). Involved in skeletal myoblast differentiation by promoting gene expression of CALD1 (PubMed:26291311).</text>
</comment>
<comment type="subunit">
    <text evidence="4">Interacts with UBE2I (PubMed:16631117). Interacts with HDAC1; interaction inhibits the transcriptional activator activity (PubMed:16631117).</text>
</comment>
<comment type="interaction">
    <interactant intactId="EBI-6672525">
        <id>Q06945</id>
    </interactant>
    <interactant intactId="EBI-366083">
        <id>P04637</id>
        <label>TP53</label>
    </interactant>
    <organismsDiffer>false</organismsDiffer>
    <experiments>4</experiments>
</comment>
<comment type="subcellular location">
    <subcellularLocation>
        <location evidence="2 4">Nucleus</location>
    </subcellularLocation>
</comment>
<comment type="tissue specificity">
    <text evidence="8">Testis, brain, and heart.</text>
</comment>
<comment type="domain">
    <text evidence="7">The 9aaTAD motif is a transactivation domain present in a large number of yeast and animal transcription factors.</text>
</comment>
<comment type="PTM">
    <text evidence="5">Acetylation at Lys-95 by KAT5 promotes the transcription activator activity and is required during myoblast differentiation (PubMed:26291311). Acetylation by KAT5 abolishes the interaction between SOX4 and HDAC1 and switches SOX4 into a transcriptional activator (PubMed:26291311).</text>
</comment>
<comment type="disease" evidence="6">
    <disease id="DI-05618">
        <name>Intellectual developmental disorder with speech delay and dysmorphic facies</name>
        <acronym>IDDSDF</acronym>
        <description>An autosomal dominant disorder characterized by mild to severe intellectual disability, global developmental delay, mild but distinct facial dysmorphism, fifth finger clinodactyly, and small stature. Hypotonia, ventricular septal defect, and spastic quadriparesis may also be present.</description>
        <dbReference type="MIM" id="618506"/>
    </disease>
    <text>The disease is caused by variants affecting the gene represented in this entry.</text>
</comment>
<comment type="online information" name="Atlas of Genetics and Cytogenetics in Oncology and Haematology">
    <link uri="https://atlasgeneticsoncology.org/gene/42358/SOX4"/>
</comment>
<organism>
    <name type="scientific">Homo sapiens</name>
    <name type="common">Human</name>
    <dbReference type="NCBI Taxonomy" id="9606"/>
    <lineage>
        <taxon>Eukaryota</taxon>
        <taxon>Metazoa</taxon>
        <taxon>Chordata</taxon>
        <taxon>Craniata</taxon>
        <taxon>Vertebrata</taxon>
        <taxon>Euteleostomi</taxon>
        <taxon>Mammalia</taxon>
        <taxon>Eutheria</taxon>
        <taxon>Euarchontoglires</taxon>
        <taxon>Primates</taxon>
        <taxon>Haplorrhini</taxon>
        <taxon>Catarrhini</taxon>
        <taxon>Hominidae</taxon>
        <taxon>Homo</taxon>
    </lineage>
</organism>
<proteinExistence type="evidence at protein level"/>
<keyword id="KW-0007">Acetylation</keyword>
<keyword id="KW-0010">Activator</keyword>
<keyword id="KW-0225">Disease variant</keyword>
<keyword id="KW-0238">DNA-binding</keyword>
<keyword id="KW-0991">Intellectual disability</keyword>
<keyword id="KW-0539">Nucleus</keyword>
<keyword id="KW-1267">Proteomics identification</keyword>
<keyword id="KW-1185">Reference proteome</keyword>
<keyword id="KW-0804">Transcription</keyword>
<keyword id="KW-0805">Transcription regulation</keyword>
<sequence>MVQQTNNAENTEALLAGESSDSGAGLELGIASSPTPGSTASTGGKADDPSWCKTPSGHIKRPMNAFMVWSQIERRKIMEQSPDMHNAEISKRLGKRWKLLKDSDKIPFIREAERLRLKHMADYPDYKYRPRKKVKSGNANSSSSAAASSKPGEKGDKVGGSGGGGHGGGGGGGSSNAGGGGGGASGGGANSKPAQKKSCGSKVAGGAGGGVSKPHAKLILAGGGGGGKAAAAAAASFAAEQAGAAALLPLGAAADHHSLYKARTPSASASASSAASASAALAAPGKHLAEKKVKRVYLFGGLGTSSSPVGGVGAGADPSDPLGLYEEEGAGCSPDAPSLSGRSSAASSPAAGRSPADHRGYASLRAASPAPSSAPSHASSSASSHSSSSSSSGSSSSDDEFEDDLLDLNPSSNFESMSLGSFSSSSALDRDLDFNFEPGSGSHFEFPDYCTPEVSEMISGDWLESSISNLVFTY</sequence>
<evidence type="ECO:0000250" key="1">
    <source>
        <dbReference type="UniProtKB" id="Q06831"/>
    </source>
</evidence>
<evidence type="ECO:0000255" key="2">
    <source>
        <dbReference type="PROSITE-ProRule" id="PRU00267"/>
    </source>
</evidence>
<evidence type="ECO:0000256" key="3">
    <source>
        <dbReference type="SAM" id="MobiDB-lite"/>
    </source>
</evidence>
<evidence type="ECO:0000269" key="4">
    <source>
    </source>
</evidence>
<evidence type="ECO:0000269" key="5">
    <source>
    </source>
</evidence>
<evidence type="ECO:0000269" key="6">
    <source>
    </source>
</evidence>
<evidence type="ECO:0000269" key="7">
    <source>
    </source>
</evidence>
<evidence type="ECO:0000269" key="8">
    <source>
    </source>
</evidence>
<evidence type="ECO:0000303" key="9">
    <source>
    </source>
</evidence>
<evidence type="ECO:0000305" key="10"/>
<evidence type="ECO:0000312" key="11">
    <source>
        <dbReference type="HGNC" id="HGNC:11200"/>
    </source>
</evidence>
<feature type="chain" id="PRO_0000048724" description="Transcription factor SOX-4">
    <location>
        <begin position="1"/>
        <end position="474"/>
    </location>
</feature>
<feature type="DNA-binding region" description="HMG box" evidence="2">
    <location>
        <begin position="59"/>
        <end position="127"/>
    </location>
</feature>
<feature type="region of interest" description="Disordered" evidence="3">
    <location>
        <begin position="1"/>
        <end position="58"/>
    </location>
</feature>
<feature type="region of interest" description="Disordered" evidence="3">
    <location>
        <begin position="128"/>
        <end position="228"/>
    </location>
</feature>
<feature type="region of interest" description="Disordered" evidence="3">
    <location>
        <begin position="262"/>
        <end position="286"/>
    </location>
</feature>
<feature type="region of interest" description="Disordered" evidence="3">
    <location>
        <begin position="302"/>
        <end position="416"/>
    </location>
</feature>
<feature type="short sequence motif" description="9aaTAD" evidence="7">
    <location>
        <begin position="426"/>
        <end position="434"/>
    </location>
</feature>
<feature type="compositionally biased region" description="Polar residues" evidence="3">
    <location>
        <begin position="1"/>
        <end position="10"/>
    </location>
</feature>
<feature type="compositionally biased region" description="Low complexity" evidence="3">
    <location>
        <begin position="31"/>
        <end position="44"/>
    </location>
</feature>
<feature type="compositionally biased region" description="Low complexity" evidence="3">
    <location>
        <begin position="138"/>
        <end position="149"/>
    </location>
</feature>
<feature type="compositionally biased region" description="Gly residues" evidence="3">
    <location>
        <begin position="158"/>
        <end position="189"/>
    </location>
</feature>
<feature type="compositionally biased region" description="Low complexity" evidence="3">
    <location>
        <begin position="266"/>
        <end position="283"/>
    </location>
</feature>
<feature type="compositionally biased region" description="Low complexity" evidence="3">
    <location>
        <begin position="304"/>
        <end position="320"/>
    </location>
</feature>
<feature type="compositionally biased region" description="Low complexity" evidence="3">
    <location>
        <begin position="336"/>
        <end position="354"/>
    </location>
</feature>
<feature type="compositionally biased region" description="Low complexity" evidence="3">
    <location>
        <begin position="366"/>
        <end position="396"/>
    </location>
</feature>
<feature type="compositionally biased region" description="Acidic residues" evidence="3">
    <location>
        <begin position="397"/>
        <end position="406"/>
    </location>
</feature>
<feature type="compositionally biased region" description="Low complexity" evidence="3">
    <location>
        <begin position="407"/>
        <end position="416"/>
    </location>
</feature>
<feature type="modified residue" description="N6-acetyllysine" evidence="5">
    <location>
        <position position="95"/>
    </location>
</feature>
<feature type="sequence variant" id="VAR_083360" description="In IDDSDF; loss of DNA-binding transcription factor activity; dbSNP:rs1582601669." evidence="6">
    <original>I</original>
    <variation>S</variation>
    <location>
        <position position="59"/>
    </location>
</feature>
<feature type="sequence variant" id="VAR_083361" description="In IDDSDF; loss of DNA-binding transcription factor activity; dbSNP:rs1334099693." evidence="6">
    <original>F</original>
    <variation>L</variation>
    <location>
        <position position="66"/>
    </location>
</feature>
<feature type="sequence variant" id="VAR_083362" description="In IDDSDF; loss of DNA-binding transcription factor activity; dbSNP:rs1582601747." evidence="6">
    <original>K</original>
    <variation>N</variation>
    <location>
        <position position="105"/>
    </location>
</feature>
<feature type="sequence variant" id="VAR_083363" description="In IDDSDF; loss DNA-binding transcription factor activity; dbSNP:rs1464282327." evidence="6">
    <original>A</original>
    <variation>P</variation>
    <location>
        <position position="112"/>
    </location>
</feature>
<feature type="mutagenesis site" description="Does not affect acetylation by KAT5." evidence="5">
    <original>K</original>
    <variation>R</variation>
    <location>
        <position position="45"/>
    </location>
</feature>
<feature type="mutagenesis site" description="Abolished acetylation by KAT5." evidence="5">
    <original>K</original>
    <variation>R</variation>
    <location>
        <position position="95"/>
    </location>
</feature>
<feature type="sequence conflict" description="In Ref. 4; CAA46612." evidence="10" ref="4">
    <original>Q</original>
    <variation>P</variation>
    <location>
        <position position="71"/>
    </location>
</feature>
<gene>
    <name evidence="9 11" type="primary">SOX4</name>
</gene>
<reference key="1">
    <citation type="journal article" date="1993" name="Mamm. Genome">
        <title>Characterization and mapping of the human SOX4 gene.</title>
        <authorList>
            <person name="Farr C.J."/>
            <person name="Easty D.J."/>
            <person name="Ragoussis J."/>
            <person name="Collignon J."/>
            <person name="Lovell-Badge R."/>
            <person name="Goodfellow P.N."/>
        </authorList>
    </citation>
    <scope>NUCLEOTIDE SEQUENCE [MRNA]</scope>
    <scope>TISSUE SPECIFICITY</scope>
</reference>
<reference key="2">
    <citation type="journal article" date="2003" name="Nature">
        <title>The DNA sequence and analysis of human chromosome 6.</title>
        <authorList>
            <person name="Mungall A.J."/>
            <person name="Palmer S.A."/>
            <person name="Sims S.K."/>
            <person name="Edwards C.A."/>
            <person name="Ashurst J.L."/>
            <person name="Wilming L."/>
            <person name="Jones M.C."/>
            <person name="Horton R."/>
            <person name="Hunt S.E."/>
            <person name="Scott C.E."/>
            <person name="Gilbert J.G.R."/>
            <person name="Clamp M.E."/>
            <person name="Bethel G."/>
            <person name="Milne S."/>
            <person name="Ainscough R."/>
            <person name="Almeida J.P."/>
            <person name="Ambrose K.D."/>
            <person name="Andrews T.D."/>
            <person name="Ashwell R.I.S."/>
            <person name="Babbage A.K."/>
            <person name="Bagguley C.L."/>
            <person name="Bailey J."/>
            <person name="Banerjee R."/>
            <person name="Barker D.J."/>
            <person name="Barlow K.F."/>
            <person name="Bates K."/>
            <person name="Beare D.M."/>
            <person name="Beasley H."/>
            <person name="Beasley O."/>
            <person name="Bird C.P."/>
            <person name="Blakey S.E."/>
            <person name="Bray-Allen S."/>
            <person name="Brook J."/>
            <person name="Brown A.J."/>
            <person name="Brown J.Y."/>
            <person name="Burford D.C."/>
            <person name="Burrill W."/>
            <person name="Burton J."/>
            <person name="Carder C."/>
            <person name="Carter N.P."/>
            <person name="Chapman J.C."/>
            <person name="Clark S.Y."/>
            <person name="Clark G."/>
            <person name="Clee C.M."/>
            <person name="Clegg S."/>
            <person name="Cobley V."/>
            <person name="Collier R.E."/>
            <person name="Collins J.E."/>
            <person name="Colman L.K."/>
            <person name="Corby N.R."/>
            <person name="Coville G.J."/>
            <person name="Culley K.M."/>
            <person name="Dhami P."/>
            <person name="Davies J."/>
            <person name="Dunn M."/>
            <person name="Earthrowl M.E."/>
            <person name="Ellington A.E."/>
            <person name="Evans K.A."/>
            <person name="Faulkner L."/>
            <person name="Francis M.D."/>
            <person name="Frankish A."/>
            <person name="Frankland J."/>
            <person name="French L."/>
            <person name="Garner P."/>
            <person name="Garnett J."/>
            <person name="Ghori M.J."/>
            <person name="Gilby L.M."/>
            <person name="Gillson C.J."/>
            <person name="Glithero R.J."/>
            <person name="Grafham D.V."/>
            <person name="Grant M."/>
            <person name="Gribble S."/>
            <person name="Griffiths C."/>
            <person name="Griffiths M.N.D."/>
            <person name="Hall R."/>
            <person name="Halls K.S."/>
            <person name="Hammond S."/>
            <person name="Harley J.L."/>
            <person name="Hart E.A."/>
            <person name="Heath P.D."/>
            <person name="Heathcott R."/>
            <person name="Holmes S.J."/>
            <person name="Howden P.J."/>
            <person name="Howe K.L."/>
            <person name="Howell G.R."/>
            <person name="Huckle E."/>
            <person name="Humphray S.J."/>
            <person name="Humphries M.D."/>
            <person name="Hunt A.R."/>
            <person name="Johnson C.M."/>
            <person name="Joy A.A."/>
            <person name="Kay M."/>
            <person name="Keenan S.J."/>
            <person name="Kimberley A.M."/>
            <person name="King A."/>
            <person name="Laird G.K."/>
            <person name="Langford C."/>
            <person name="Lawlor S."/>
            <person name="Leongamornlert D.A."/>
            <person name="Leversha M."/>
            <person name="Lloyd C.R."/>
            <person name="Lloyd D.M."/>
            <person name="Loveland J.E."/>
            <person name="Lovell J."/>
            <person name="Martin S."/>
            <person name="Mashreghi-Mohammadi M."/>
            <person name="Maslen G.L."/>
            <person name="Matthews L."/>
            <person name="McCann O.T."/>
            <person name="McLaren S.J."/>
            <person name="McLay K."/>
            <person name="McMurray A."/>
            <person name="Moore M.J.F."/>
            <person name="Mullikin J.C."/>
            <person name="Niblett D."/>
            <person name="Nickerson T."/>
            <person name="Novik K.L."/>
            <person name="Oliver K."/>
            <person name="Overton-Larty E.K."/>
            <person name="Parker A."/>
            <person name="Patel R."/>
            <person name="Pearce A.V."/>
            <person name="Peck A.I."/>
            <person name="Phillimore B.J.C.T."/>
            <person name="Phillips S."/>
            <person name="Plumb R.W."/>
            <person name="Porter K.M."/>
            <person name="Ramsey Y."/>
            <person name="Ranby S.A."/>
            <person name="Rice C.M."/>
            <person name="Ross M.T."/>
            <person name="Searle S.M."/>
            <person name="Sehra H.K."/>
            <person name="Sheridan E."/>
            <person name="Skuce C.D."/>
            <person name="Smith S."/>
            <person name="Smith M."/>
            <person name="Spraggon L."/>
            <person name="Squares S.L."/>
            <person name="Steward C.A."/>
            <person name="Sycamore N."/>
            <person name="Tamlyn-Hall G."/>
            <person name="Tester J."/>
            <person name="Theaker A.J."/>
            <person name="Thomas D.W."/>
            <person name="Thorpe A."/>
            <person name="Tracey A."/>
            <person name="Tromans A."/>
            <person name="Tubby B."/>
            <person name="Wall M."/>
            <person name="Wallis J.M."/>
            <person name="West A.P."/>
            <person name="White S.S."/>
            <person name="Whitehead S.L."/>
            <person name="Whittaker H."/>
            <person name="Wild A."/>
            <person name="Willey D.J."/>
            <person name="Wilmer T.E."/>
            <person name="Wood J.M."/>
            <person name="Wray P.W."/>
            <person name="Wyatt J.C."/>
            <person name="Young L."/>
            <person name="Younger R.M."/>
            <person name="Bentley D.R."/>
            <person name="Coulson A."/>
            <person name="Durbin R.M."/>
            <person name="Hubbard T."/>
            <person name="Sulston J.E."/>
            <person name="Dunham I."/>
            <person name="Rogers J."/>
            <person name="Beck S."/>
        </authorList>
    </citation>
    <scope>NUCLEOTIDE SEQUENCE [LARGE SCALE GENOMIC DNA]</scope>
</reference>
<reference key="3">
    <citation type="journal article" date="2004" name="Genome Res.">
        <title>The status, quality, and expansion of the NIH full-length cDNA project: the Mammalian Gene Collection (MGC).</title>
        <authorList>
            <consortium name="The MGC Project Team"/>
        </authorList>
    </citation>
    <scope>NUCLEOTIDE SEQUENCE [LARGE SCALE MRNA]</scope>
    <source>
        <tissue>Ovary</tissue>
    </source>
</reference>
<reference key="4">
    <citation type="journal article" date="1992" name="Nucleic Acids Res.">
        <title>A conserved family of genes related to the testis determining gene, SRY.</title>
        <authorList>
            <person name="Denny P."/>
            <person name="Swift S."/>
            <person name="Brand N."/>
            <person name="Dabhade N."/>
            <person name="Barton P."/>
            <person name="Ashworth A."/>
        </authorList>
    </citation>
    <scope>NUCLEOTIDE SEQUENCE [GENOMIC DNA] OF 70-123</scope>
</reference>
<reference key="5">
    <citation type="journal article" date="2006" name="Biochem. Biophys. Res. Commun.">
        <title>Ubc9 interacts with SOX4 and represses its transcriptional activity.</title>
        <authorList>
            <person name="Pan X."/>
            <person name="Li H."/>
            <person name="Zhang P."/>
            <person name="Jin B."/>
            <person name="Man J."/>
            <person name="Tian L."/>
            <person name="Su G."/>
            <person name="Zhao J."/>
            <person name="Li W."/>
            <person name="Liu H."/>
            <person name="Gong W."/>
            <person name="Zhou T."/>
            <person name="Zhang X."/>
        </authorList>
    </citation>
    <scope>INTERACTION WITH UBE2I</scope>
    <scope>SUBCELLULAR LOCATION</scope>
</reference>
<reference key="6">
    <citation type="journal article" date="2015" name="Cell Death Dis.">
        <title>KAT5-mediated SOX4 acetylation orchestrates chromatin remodeling during myoblast differentiation.</title>
        <authorList>
            <person name="Jang S.M."/>
            <person name="Kim J.W."/>
            <person name="Kim C.H."/>
            <person name="An J.H."/>
            <person name="Johnson A."/>
            <person name="Song P.I."/>
            <person name="Rhee S."/>
            <person name="Choi K.H."/>
        </authorList>
    </citation>
    <scope>FUNCTION</scope>
    <scope>INTERACTION WITH HDAC1</scope>
    <scope>ACETYLATION AT LYS-95</scope>
    <scope>MUTAGENESIS OF LYS-45 AND LYS-95</scope>
</reference>
<reference key="7">
    <citation type="journal article" date="2021" name="Stem. Cell. Rev. Rep.">
        <title>The 9aaTAD Activation Domains in the Yamanaka Transcription Factors Oct4, Sox2, Myc, and Klf4.</title>
        <authorList>
            <person name="Piskacek M."/>
            <person name="Otasevic T."/>
            <person name="Repko M."/>
            <person name="Knight A."/>
        </authorList>
    </citation>
    <scope>9AATAD MOTIF</scope>
</reference>
<reference key="8">
    <citation type="journal article" date="2019" name="Am. J. Hum. Genet.">
        <title>De Novo SOX4 Variants Cause a Neurodevelopmental Disease Associated with Mild Dysmorphism.</title>
        <authorList>
            <consortium name="Deciphering Developmental Disorders Study"/>
            <consortium name="University of Washington Center for Mendelian Genomics"/>
            <person name="Zawerton A."/>
            <person name="Yao B."/>
            <person name="Yeager J.P."/>
            <person name="Pippucci T."/>
            <person name="Haseeb A."/>
            <person name="Smith J.D."/>
            <person name="Wischmann L."/>
            <person name="Kuehl S.J."/>
            <person name="Dean J.C.S."/>
            <person name="Pilz D.T."/>
            <person name="Holder S.E."/>
            <person name="McNeill A."/>
            <person name="Graziano C."/>
            <person name="Lefebvre V."/>
        </authorList>
    </citation>
    <scope>INVOLVEMENT IN IDDSDF</scope>
    <scope>VARIANTS IDDSDF SER-59; LEU-66; ASN-105 AND PRO-112</scope>
    <scope>CHARACTERIZATION OF VARIANTS IDDSDF SER-59; LEU-66; ASN-105 AND PRO-112</scope>
    <scope>FUNCTION</scope>
</reference>